<feature type="chain" id="PRO_1000149774" description="K(+)/H(+) antiporter NhaP2">
    <location>
        <begin position="1"/>
        <end position="577"/>
    </location>
</feature>
<feature type="transmembrane region" description="Helical" evidence="1">
    <location>
        <begin position="3"/>
        <end position="23"/>
    </location>
</feature>
<feature type="transmembrane region" description="Helical" evidence="1">
    <location>
        <begin position="30"/>
        <end position="50"/>
    </location>
</feature>
<feature type="transmembrane region" description="Helical" evidence="1">
    <location>
        <begin position="58"/>
        <end position="78"/>
    </location>
</feature>
<feature type="transmembrane region" description="Helical" evidence="1">
    <location>
        <begin position="87"/>
        <end position="107"/>
    </location>
</feature>
<feature type="transmembrane region" description="Helical" evidence="1">
    <location>
        <begin position="109"/>
        <end position="129"/>
    </location>
</feature>
<feature type="transmembrane region" description="Helical" evidence="1">
    <location>
        <begin position="185"/>
        <end position="205"/>
    </location>
</feature>
<feature type="transmembrane region" description="Helical" evidence="1">
    <location>
        <begin position="221"/>
        <end position="241"/>
    </location>
</feature>
<feature type="transmembrane region" description="Helical" evidence="1">
    <location>
        <begin position="271"/>
        <end position="291"/>
    </location>
</feature>
<feature type="transmembrane region" description="Helical" evidence="1">
    <location>
        <begin position="293"/>
        <end position="313"/>
    </location>
</feature>
<feature type="transmembrane region" description="Helical" evidence="1">
    <location>
        <begin position="334"/>
        <end position="354"/>
    </location>
</feature>
<feature type="transmembrane region" description="Helical" evidence="1">
    <location>
        <begin position="363"/>
        <end position="383"/>
    </location>
</feature>
<feature type="domain" description="RCK C-terminal" evidence="1">
    <location>
        <begin position="403"/>
        <end position="485"/>
    </location>
</feature>
<keyword id="KW-0050">Antiport</keyword>
<keyword id="KW-0997">Cell inner membrane</keyword>
<keyword id="KW-1003">Cell membrane</keyword>
<keyword id="KW-0406">Ion transport</keyword>
<keyword id="KW-0472">Membrane</keyword>
<keyword id="KW-0630">Potassium</keyword>
<keyword id="KW-0633">Potassium transport</keyword>
<keyword id="KW-0812">Transmembrane</keyword>
<keyword id="KW-1133">Transmembrane helix</keyword>
<keyword id="KW-0813">Transport</keyword>
<dbReference type="EMBL" id="CP000857">
    <property type="protein sequence ID" value="ACN46064.1"/>
    <property type="molecule type" value="Genomic_DNA"/>
</dbReference>
<dbReference type="RefSeq" id="WP_000338376.1">
    <property type="nucleotide sequence ID" value="NC_012125.1"/>
</dbReference>
<dbReference type="SMR" id="C0Q332"/>
<dbReference type="KEGG" id="sei:SPC_1928"/>
<dbReference type="HOGENOM" id="CLU_005912_9_2_6"/>
<dbReference type="Proteomes" id="UP000001599">
    <property type="component" value="Chromosome"/>
</dbReference>
<dbReference type="GO" id="GO:0005886">
    <property type="term" value="C:plasma membrane"/>
    <property type="evidence" value="ECO:0007669"/>
    <property type="project" value="UniProtKB-SubCell"/>
</dbReference>
<dbReference type="GO" id="GO:0050660">
    <property type="term" value="F:flavin adenine dinucleotide binding"/>
    <property type="evidence" value="ECO:0007669"/>
    <property type="project" value="InterPro"/>
</dbReference>
<dbReference type="GO" id="GO:0015386">
    <property type="term" value="F:potassium:proton antiporter activity"/>
    <property type="evidence" value="ECO:0007669"/>
    <property type="project" value="UniProtKB-UniRule"/>
</dbReference>
<dbReference type="GO" id="GO:0006884">
    <property type="term" value="P:cell volume homeostasis"/>
    <property type="evidence" value="ECO:0007669"/>
    <property type="project" value="InterPro"/>
</dbReference>
<dbReference type="FunFam" id="1.20.1530.20:FF:000002">
    <property type="entry name" value="K(+)/H(+) antiporter NhaP2"/>
    <property type="match status" value="1"/>
</dbReference>
<dbReference type="Gene3D" id="1.20.1530.20">
    <property type="match status" value="1"/>
</dbReference>
<dbReference type="Gene3D" id="3.30.465.10">
    <property type="match status" value="1"/>
</dbReference>
<dbReference type="Gene3D" id="3.30.70.1450">
    <property type="entry name" value="Regulator of K+ conductance, C-terminal domain"/>
    <property type="match status" value="1"/>
</dbReference>
<dbReference type="HAMAP" id="MF_01075">
    <property type="entry name" value="NhaP2"/>
    <property type="match status" value="1"/>
</dbReference>
<dbReference type="InterPro" id="IPR006153">
    <property type="entry name" value="Cation/H_exchanger_TM"/>
</dbReference>
<dbReference type="InterPro" id="IPR036318">
    <property type="entry name" value="FAD-bd_PCMH-like_sf"/>
</dbReference>
<dbReference type="InterPro" id="IPR016169">
    <property type="entry name" value="FAD-bd_PCMH_sub2"/>
</dbReference>
<dbReference type="InterPro" id="IPR038770">
    <property type="entry name" value="Na+/solute_symporter_sf"/>
</dbReference>
<dbReference type="InterPro" id="IPR023729">
    <property type="entry name" value="NhaP2"/>
</dbReference>
<dbReference type="InterPro" id="IPR006037">
    <property type="entry name" value="RCK_C"/>
</dbReference>
<dbReference type="InterPro" id="IPR036721">
    <property type="entry name" value="RCK_C_sf"/>
</dbReference>
<dbReference type="InterPro" id="IPR005170">
    <property type="entry name" value="Transptr-assoc_dom"/>
</dbReference>
<dbReference type="NCBIfam" id="NF003714">
    <property type="entry name" value="PRK05326.1-1"/>
    <property type="match status" value="1"/>
</dbReference>
<dbReference type="NCBIfam" id="NF003715">
    <property type="entry name" value="PRK05326.1-2"/>
    <property type="match status" value="1"/>
</dbReference>
<dbReference type="NCBIfam" id="NF003716">
    <property type="entry name" value="PRK05326.1-3"/>
    <property type="match status" value="1"/>
</dbReference>
<dbReference type="PANTHER" id="PTHR32507:SF7">
    <property type="entry name" value="K(+)_H(+) ANTIPORTER NHAP2"/>
    <property type="match status" value="1"/>
</dbReference>
<dbReference type="PANTHER" id="PTHR32507">
    <property type="entry name" value="NA(+)/H(+) ANTIPORTER 1"/>
    <property type="match status" value="1"/>
</dbReference>
<dbReference type="Pfam" id="PF03471">
    <property type="entry name" value="CorC_HlyC"/>
    <property type="match status" value="1"/>
</dbReference>
<dbReference type="Pfam" id="PF00999">
    <property type="entry name" value="Na_H_Exchanger"/>
    <property type="match status" value="1"/>
</dbReference>
<dbReference type="Pfam" id="PF02080">
    <property type="entry name" value="TrkA_C"/>
    <property type="match status" value="1"/>
</dbReference>
<dbReference type="SMART" id="SM01091">
    <property type="entry name" value="CorC_HlyC"/>
    <property type="match status" value="1"/>
</dbReference>
<dbReference type="SUPFAM" id="SSF56176">
    <property type="entry name" value="FAD-binding/transporter-associated domain-like"/>
    <property type="match status" value="1"/>
</dbReference>
<dbReference type="SUPFAM" id="SSF116726">
    <property type="entry name" value="TrkA C-terminal domain-like"/>
    <property type="match status" value="1"/>
</dbReference>
<dbReference type="PROSITE" id="PS51202">
    <property type="entry name" value="RCK_C"/>
    <property type="match status" value="1"/>
</dbReference>
<sequence length="577" mass="62469">MDAATIISLFILGSILVTSSILLSSFSSRLGIPILVIFLAIGMLAGVDGIGGIPFDNYPFAYMVSNLALAIILLDGGMRTQASSFRVALGPALSLATLGVLITSGLTGMMAAWLFHLDLIEGLLIGAIVGSTDAAAVFSLLGGKGLNERVGSTLEIESGSNDPMAVFLTITLIEMIQKHETGLDWMFAVHIIQQFGLGIVFGLGGGYLLQQMINRISLPSGLYPMLALSGGILIFALTTALEGSGILAVYLCGFLLGNRPIRNRYGILQNFDGLAWLAQIAMFLVLGLLVTPSDLWPIAVPALILSIWMIFFARPLSVFTGLLPFRGFNLRERIFISWVGLRGAVPIILAVFPMMAGLENARLFFNVAFFVVLVSLLLQGTSLSWAAKRAKVVVPPVGWPVSRVGLDIHPDNPWEQFIYQLSADKWCVGAALRDLHMPNETRIAALFRNNELFHPTGSTRLQEGDVLCVIGRERDLPALGKLFSQSPPVSLDQRFFGDFILEANAKFADVALIYGLEEGTEYRDKQQTLGEIIQQLLGAAPVVGDQVEFGGMIWTVAEKEDNVVRKIGVRVAEDEAE</sequence>
<comment type="function">
    <text evidence="1">K(+)/H(+) antiporter that extrudes potassium in exchange for external protons and maintains the internal concentration of potassium under toxic levels.</text>
</comment>
<comment type="catalytic activity">
    <reaction evidence="1">
        <text>K(+)(in) + H(+)(out) = K(+)(out) + H(+)(in)</text>
        <dbReference type="Rhea" id="RHEA:29467"/>
        <dbReference type="ChEBI" id="CHEBI:15378"/>
        <dbReference type="ChEBI" id="CHEBI:29103"/>
    </reaction>
    <physiologicalReaction direction="left-to-right" evidence="1">
        <dbReference type="Rhea" id="RHEA:29468"/>
    </physiologicalReaction>
</comment>
<comment type="subcellular location">
    <subcellularLocation>
        <location evidence="1">Cell inner membrane</location>
        <topology evidence="1">Multi-pass membrane protein</topology>
    </subcellularLocation>
</comment>
<comment type="similarity">
    <text evidence="1">Belongs to the monovalent cation:proton antiporter 1 (CPA1) transporter (TC 2.A.36) family. NhaP2 subfamily.</text>
</comment>
<reference key="1">
    <citation type="journal article" date="2009" name="PLoS ONE">
        <title>Salmonella paratyphi C: genetic divergence from Salmonella choleraesuis and pathogenic convergence with Salmonella typhi.</title>
        <authorList>
            <person name="Liu W.-Q."/>
            <person name="Feng Y."/>
            <person name="Wang Y."/>
            <person name="Zou Q.-H."/>
            <person name="Chen F."/>
            <person name="Guo J.-T."/>
            <person name="Peng Y.-H."/>
            <person name="Jin Y."/>
            <person name="Li Y.-G."/>
            <person name="Hu S.-N."/>
            <person name="Johnston R.N."/>
            <person name="Liu G.-R."/>
            <person name="Liu S.-L."/>
        </authorList>
    </citation>
    <scope>NUCLEOTIDE SEQUENCE [LARGE SCALE GENOMIC DNA]</scope>
    <source>
        <strain>RKS4594</strain>
    </source>
</reference>
<gene>
    <name evidence="1" type="primary">nhaP2</name>
    <name type="synonym">cvrA</name>
    <name type="ordered locus">SPC_1928</name>
</gene>
<accession>C0Q332</accession>
<protein>
    <recommendedName>
        <fullName evidence="1">K(+)/H(+) antiporter NhaP2</fullName>
    </recommendedName>
    <alternativeName>
        <fullName evidence="1">Potassium/proton antiporter NhaP2</fullName>
    </alternativeName>
</protein>
<organism>
    <name type="scientific">Salmonella paratyphi C (strain RKS4594)</name>
    <dbReference type="NCBI Taxonomy" id="476213"/>
    <lineage>
        <taxon>Bacteria</taxon>
        <taxon>Pseudomonadati</taxon>
        <taxon>Pseudomonadota</taxon>
        <taxon>Gammaproteobacteria</taxon>
        <taxon>Enterobacterales</taxon>
        <taxon>Enterobacteriaceae</taxon>
        <taxon>Salmonella</taxon>
    </lineage>
</organism>
<evidence type="ECO:0000255" key="1">
    <source>
        <dbReference type="HAMAP-Rule" id="MF_01075"/>
    </source>
</evidence>
<proteinExistence type="inferred from homology"/>
<name>NHAP2_SALPC</name>